<comment type="similarity">
    <text evidence="1">Belongs to the UPF0301 (AlgH) family.</text>
</comment>
<protein>
    <recommendedName>
        <fullName evidence="1">UPF0301 protein Mflv_0850</fullName>
    </recommendedName>
</protein>
<feature type="chain" id="PRO_1000083513" description="UPF0301 protein Mflv_0850">
    <location>
        <begin position="1"/>
        <end position="204"/>
    </location>
</feature>
<proteinExistence type="inferred from homology"/>
<evidence type="ECO:0000255" key="1">
    <source>
        <dbReference type="HAMAP-Rule" id="MF_00758"/>
    </source>
</evidence>
<name>Y850_MYCGI</name>
<sequence>MASPDDPEDYQDRAAPAAHRVRAGTMLLANTDLLEPTFRRSVIYVVEHNDGGTLGVVLNRASETAVYNVLPQWAKLAVKPKTMFIGGPVKRDAALCLGTLRVGSDPVGVPGLRHVQGRIVMVDLDADPDELAPILEGVRIFAGYSGWTIGQLEGEIERDDWIVLSALPTDVLVEPKVDLWARILRRQPMPLSLLATHPIDLSRN</sequence>
<accession>A4T4R8</accession>
<reference key="1">
    <citation type="submission" date="2007-04" db="EMBL/GenBank/DDBJ databases">
        <title>Complete sequence of chromosome of Mycobacterium gilvum PYR-GCK.</title>
        <authorList>
            <consortium name="US DOE Joint Genome Institute"/>
            <person name="Copeland A."/>
            <person name="Lucas S."/>
            <person name="Lapidus A."/>
            <person name="Barry K."/>
            <person name="Detter J.C."/>
            <person name="Glavina del Rio T."/>
            <person name="Hammon N."/>
            <person name="Israni S."/>
            <person name="Dalin E."/>
            <person name="Tice H."/>
            <person name="Pitluck S."/>
            <person name="Chain P."/>
            <person name="Malfatti S."/>
            <person name="Shin M."/>
            <person name="Vergez L."/>
            <person name="Schmutz J."/>
            <person name="Larimer F."/>
            <person name="Land M."/>
            <person name="Hauser L."/>
            <person name="Kyrpides N."/>
            <person name="Mikhailova N."/>
            <person name="Miller C."/>
            <person name="Richardson P."/>
        </authorList>
    </citation>
    <scope>NUCLEOTIDE SEQUENCE [LARGE SCALE GENOMIC DNA]</scope>
    <source>
        <strain>PYR-GCK</strain>
    </source>
</reference>
<dbReference type="EMBL" id="CP000656">
    <property type="protein sequence ID" value="ABP43334.1"/>
    <property type="molecule type" value="Genomic_DNA"/>
</dbReference>
<dbReference type="SMR" id="A4T4R8"/>
<dbReference type="STRING" id="350054.Mflv_0850"/>
<dbReference type="KEGG" id="mgi:Mflv_0850"/>
<dbReference type="eggNOG" id="COG1678">
    <property type="taxonomic scope" value="Bacteria"/>
</dbReference>
<dbReference type="HOGENOM" id="CLU_057596_2_0_11"/>
<dbReference type="OrthoDB" id="9807486at2"/>
<dbReference type="GO" id="GO:0005829">
    <property type="term" value="C:cytosol"/>
    <property type="evidence" value="ECO:0007669"/>
    <property type="project" value="TreeGrafter"/>
</dbReference>
<dbReference type="Gene3D" id="3.40.1740.10">
    <property type="entry name" value="VC0467-like"/>
    <property type="match status" value="1"/>
</dbReference>
<dbReference type="HAMAP" id="MF_00758">
    <property type="entry name" value="UPF0301"/>
    <property type="match status" value="1"/>
</dbReference>
<dbReference type="InterPro" id="IPR003774">
    <property type="entry name" value="AlgH-like"/>
</dbReference>
<dbReference type="NCBIfam" id="NF001269">
    <property type="entry name" value="PRK00228.2-1"/>
    <property type="match status" value="1"/>
</dbReference>
<dbReference type="NCBIfam" id="NF001272">
    <property type="entry name" value="PRK00228.2-4"/>
    <property type="match status" value="1"/>
</dbReference>
<dbReference type="PANTHER" id="PTHR30327">
    <property type="entry name" value="UNCHARACTERIZED PROTEIN YQGE"/>
    <property type="match status" value="1"/>
</dbReference>
<dbReference type="PANTHER" id="PTHR30327:SF1">
    <property type="entry name" value="UPF0301 PROTEIN YQGE"/>
    <property type="match status" value="1"/>
</dbReference>
<dbReference type="Pfam" id="PF02622">
    <property type="entry name" value="DUF179"/>
    <property type="match status" value="1"/>
</dbReference>
<dbReference type="SUPFAM" id="SSF143456">
    <property type="entry name" value="VC0467-like"/>
    <property type="match status" value="1"/>
</dbReference>
<gene>
    <name type="ordered locus">Mflv_0850</name>
</gene>
<organism>
    <name type="scientific">Mycolicibacterium gilvum (strain PYR-GCK)</name>
    <name type="common">Mycobacterium gilvum (strain PYR-GCK)</name>
    <dbReference type="NCBI Taxonomy" id="350054"/>
    <lineage>
        <taxon>Bacteria</taxon>
        <taxon>Bacillati</taxon>
        <taxon>Actinomycetota</taxon>
        <taxon>Actinomycetes</taxon>
        <taxon>Mycobacteriales</taxon>
        <taxon>Mycobacteriaceae</taxon>
        <taxon>Mycolicibacterium</taxon>
    </lineage>
</organism>